<keyword id="KW-0965">Cell junction</keyword>
<keyword id="KW-0963">Cytoplasm</keyword>
<keyword id="KW-0968">Cytoplasmic vesicle</keyword>
<keyword id="KW-0206">Cytoskeleton</keyword>
<keyword id="KW-0903">Direct protein sequencing</keyword>
<keyword id="KW-0333">Golgi apparatus</keyword>
<keyword id="KW-0343">GTPase activation</keyword>
<keyword id="KW-1017">Isopeptide bond</keyword>
<keyword id="KW-0472">Membrane</keyword>
<keyword id="KW-0488">Methylation</keyword>
<keyword id="KW-0597">Phosphoprotein</keyword>
<keyword id="KW-1185">Reference proteome</keyword>
<keyword id="KW-0832">Ubl conjugation</keyword>
<sequence>MMATHWTGLPEEDGDKLKACGAASACEVSKNKDGKDQGEPVSPSEDEPFSWPGPKTVMLKRTSQGFGFTLRHFIVYPPESAIQFSYKDEENGNRGGKQRNRLEPMDTIFVKQVKEGGPAFEAGLCTGDRIIKVNGESVIGKTYSQVIALIQNSDTTLELSVMPKDEDILQVAYSQDAYLKGNEAYSGNARNIPEPPPVCYPWLPSTPSATAQPVETCPPDSLPNKQQTSAPVLTQPGRAYRMEIQVPPSPTDVAKSNTAVCVCNESVRTVIVPSEKVVDLLANRNNPSGPSHRTEEVRYGVNEQASTKAASRTTSPASVPTAHLIHQTTGSRSLEPSGILLKSGNYSGHSEGISSSRSQAVDSPPVSVNHYSANSHQHIDWKNYKTYKEYIDNRRLHIGCRTIQERLDSLRAASQSAADYNQVVPTRTTLQVRRRSTSHDRVPQSVQIRQRSVSQERLEDSVLMKYCPRSASQGALTSPPVSFNNHRTRSWDYIEGQTEATATVNSESQIPDSNGERKQTYKWSGFTEQDDRRGIHERPRQQEMHKPFRGSNLTVAPVVNSDNRRLVGRGVGPVSQFKKIPPDLRPPHSNRNFPTTTGVSLQRGIAQDRSPLVKVRSNSLKVPPPPVSKPSFSQHSLASMKDQRPVNHLHQHSVLSQQTQFRSESTFEHQLETEVSSCLPGTSAKTSPQLSENLGTSDLELPAIPRNGDINLQEAEIQQPDVLDNKESVILREKPQSGRQTPQPLRHQSYILAVNDQETGSDTTCWLPNDARREVHIKRMEERKASSTSPPGDSLASIPFIDEPTSPSIDHEIAHIPASAVISASTAHVPSIATVPPSLTTSAPLIRRQLSHDQESVGPPSLDGQHSSKTERSKSYDEGLDDYREDAKLSFKHVSSLKGIKITDSQKSSEDSGSRKGSSSEVFSDAAREGWLQFRPLVTDKGKRVGGSIRPWKQMYVVLRGHSLYLYKDRREQTTPSEEEQPISVNACLIDISYSETKRRNVFRLTTSDCECLFQAEDRDDMLSWIKTIQESSNLNEEDTGVTNRDLISRRIKEYNSLLSKTEQLPKTPRQSLSIRQTLLGAKSEPKTQSPHSPKEESERKLLSKDDTSPPKDKGTWRRGIPSIVRKTFEKKPAATGTFGVRLDDCPPAHTNRYIPLIVDICCKLVEERGLEYTGIYRVPGNNAAISSMQEELNKGMADIDIQDDKWRDLNVISSLLKSFFRKLPEPLFTNDKYADFIEANRKEDPLDRLRTLKRLIHDLPEHHFETLKFLSAHLKTVAENSEKNKMEPRNLAIVFGPTLVRTSEDNMTHMVTHMPDQYKIVETLIQHHDWFFTEEGAEEPLTAVQEENTVDSQPVPNIDHLLTNIGRTGVLPGDVSDSATSDSAKSKGSWGSGKDQYSRELLVSSIFAAASRKRKKPKEKAQPSSSEDELDSVFFKKENTEQSHSEIKEESKRESETSGSKQRVVVAKESNTKKDSGTTKEEKKIPWEEPPPPHSSKRNRSPTLSCRLAMLKEGPRSLLTQKPHCEETGSDSGTLLSTSSQASLLRSSTKKSTSPETKHSEFLSIAGTTTSDYSTTSSTTYLTSLDSSRLSPEVQSVAESKGDEADDERSELVSEGRPVETDSESEFPVFPTTLTSDRLFRGKFQEVARVSRRNSEGSEASCTEGSLTPSLDSRRQQFSSHRLIECDTLSRKKSARFKSDSGSPGDTRTEKETPALAKMFDVMKKGKSTGSLLTPSRSESEKQEATWKTKIADRLKLRPRAPADDMFGVGNQKPTAETAKRKNIKRRHTLGGHRDATEISVLSFWKAHEQSADKESELSAVNRLKPKCSAQDLSISDWLARERVRTSASDLSRGEGLEPQAESPSVLGTPISTHSPPSQQPEARVAATSTLASTSQSPLFTPPQSPDQINRESFQNMSQNASSTANIHPHKQSESPDTKAETPP</sequence>
<protein>
    <recommendedName>
        <fullName evidence="8">Rho GTPase-activating protein 21</fullName>
    </recommendedName>
    <alternativeName>
        <fullName>Rho GTPase-activating protein 10</fullName>
    </alternativeName>
    <alternativeName>
        <fullName>Rho-type GTPase-activating protein 21</fullName>
    </alternativeName>
</protein>
<reference key="1">
    <citation type="journal article" date="2009" name="PLoS Biol.">
        <title>Lineage-specific biology revealed by a finished genome assembly of the mouse.</title>
        <authorList>
            <person name="Church D.M."/>
            <person name="Goodstadt L."/>
            <person name="Hillier L.W."/>
            <person name="Zody M.C."/>
            <person name="Goldstein S."/>
            <person name="She X."/>
            <person name="Bult C.J."/>
            <person name="Agarwala R."/>
            <person name="Cherry J.L."/>
            <person name="DiCuccio M."/>
            <person name="Hlavina W."/>
            <person name="Kapustin Y."/>
            <person name="Meric P."/>
            <person name="Maglott D."/>
            <person name="Birtle Z."/>
            <person name="Marques A.C."/>
            <person name="Graves T."/>
            <person name="Zhou S."/>
            <person name="Teague B."/>
            <person name="Potamousis K."/>
            <person name="Churas C."/>
            <person name="Place M."/>
            <person name="Herschleb J."/>
            <person name="Runnheim R."/>
            <person name="Forrest D."/>
            <person name="Amos-Landgraf J."/>
            <person name="Schwartz D.C."/>
            <person name="Cheng Z."/>
            <person name="Lindblad-Toh K."/>
            <person name="Eichler E.E."/>
            <person name="Ponting C.P."/>
        </authorList>
    </citation>
    <scope>NUCLEOTIDE SEQUENCE [LARGE SCALE GENOMIC DNA]</scope>
    <source>
        <strain>C57BL/6J</strain>
    </source>
</reference>
<reference key="2">
    <citation type="journal article" date="2004" name="Genome Res.">
        <title>The status, quality, and expansion of the NIH full-length cDNA project: the Mammalian Gene Collection (MGC).</title>
        <authorList>
            <consortium name="The MGC Project Team"/>
        </authorList>
    </citation>
    <scope>NUCLEOTIDE SEQUENCE [LARGE SCALE MRNA]</scope>
    <source>
        <strain>C57BL/6J</strain>
        <tissue>Brain</tissue>
        <tissue>Head</tissue>
    </source>
</reference>
<reference key="3">
    <citation type="journal article" date="2003" name="DNA Res.">
        <title>Prediction of the coding sequences of mouse homologues of KIAA gene: II. The complete nucleotide sequences of 400 mouse KIAA-homologous cDNAs identified by screening of terminal sequences of cDNA clones randomly sampled from size-fractionated libraries.</title>
        <authorList>
            <person name="Okazaki N."/>
            <person name="Kikuno R."/>
            <person name="Ohara R."/>
            <person name="Inamoto S."/>
            <person name="Aizawa H."/>
            <person name="Yuasa S."/>
            <person name="Nakajima D."/>
            <person name="Nagase T."/>
            <person name="Ohara O."/>
            <person name="Koga H."/>
        </authorList>
    </citation>
    <scope>NUCLEOTIDE SEQUENCE [LARGE SCALE MRNA] OF 684-1945</scope>
    <source>
        <tissue>Brain</tissue>
    </source>
</reference>
<reference key="4">
    <citation type="submission" date="2009-01" db="UniProtKB">
        <authorList>
            <person name="Lubec G."/>
            <person name="Sunyer B."/>
            <person name="Chen W.-Q."/>
        </authorList>
    </citation>
    <scope>PROTEIN SEQUENCE OF 1698-1709</scope>
    <scope>IDENTIFICATION BY MASS SPECTROMETRY</scope>
    <source>
        <strain>OF1</strain>
        <tissue>Hippocampus</tissue>
    </source>
</reference>
<reference key="5">
    <citation type="journal article" date="2006" name="Mol. Cell. Proteomics">
        <title>Comprehensive identification of phosphorylation sites in postsynaptic density preparations.</title>
        <authorList>
            <person name="Trinidad J.C."/>
            <person name="Specht C.G."/>
            <person name="Thalhammer A."/>
            <person name="Schoepfer R."/>
            <person name="Burlingame A.L."/>
        </authorList>
    </citation>
    <scope>PHOSPHORYLATION [LARGE SCALE ANALYSIS] AT SER-1093</scope>
    <scope>IDENTIFICATION BY MASS SPECTROMETRY [LARGE SCALE ANALYSIS]</scope>
    <source>
        <tissue>Brain</tissue>
    </source>
</reference>
<reference key="6">
    <citation type="journal article" date="2007" name="EMBO J.">
        <title>Structural basis for ARF1-mediated recruitment of ARHGAP21 to Golgi membranes.</title>
        <authorList>
            <person name="Menetrey J."/>
            <person name="Perderiset M."/>
            <person name="Cicolari J."/>
            <person name="Dubois T."/>
            <person name="Elkhatib N."/>
            <person name="El Khadali F."/>
            <person name="Franco M."/>
            <person name="Chavrier P."/>
            <person name="Houdusse A."/>
        </authorList>
    </citation>
    <scope>INTERACTION WITH ARF1</scope>
</reference>
<reference key="7">
    <citation type="journal article" date="2007" name="Proc. Natl. Acad. Sci. U.S.A.">
        <title>Large-scale phosphorylation analysis of mouse liver.</title>
        <authorList>
            <person name="Villen J."/>
            <person name="Beausoleil S.A."/>
            <person name="Gerber S.A."/>
            <person name="Gygi S.P."/>
        </authorList>
    </citation>
    <scope>IDENTIFICATION BY MASS SPECTROMETRY [LARGE SCALE ANALYSIS]</scope>
    <source>
        <tissue>Liver</tissue>
    </source>
</reference>
<reference key="8">
    <citation type="journal article" date="2009" name="Immunity">
        <title>The phagosomal proteome in interferon-gamma-activated macrophages.</title>
        <authorList>
            <person name="Trost M."/>
            <person name="English L."/>
            <person name="Lemieux S."/>
            <person name="Courcelles M."/>
            <person name="Desjardins M."/>
            <person name="Thibault P."/>
        </authorList>
    </citation>
    <scope>PHOSPHORYLATION [LARGE SCALE ANALYSIS] AT SER-918</scope>
    <scope>IDENTIFICATION BY MASS SPECTROMETRY [LARGE SCALE ANALYSIS]</scope>
</reference>
<reference key="9">
    <citation type="journal article" date="2010" name="Cell">
        <title>A tissue-specific atlas of mouse protein phosphorylation and expression.</title>
        <authorList>
            <person name="Huttlin E.L."/>
            <person name="Jedrychowski M.P."/>
            <person name="Elias J.E."/>
            <person name="Goswami T."/>
            <person name="Rad R."/>
            <person name="Beausoleil S.A."/>
            <person name="Villen J."/>
            <person name="Haas W."/>
            <person name="Sowa M.E."/>
            <person name="Gygi S.P."/>
        </authorList>
    </citation>
    <scope>PHOSPHORYLATION [LARGE SCALE ANALYSIS] AT SER-42; SER-851; SER-856; SER-918; SER-920; SER-1427; SER-1656; THR-1669; THR-1902 AND SER-1906</scope>
    <scope>IDENTIFICATION BY MASS SPECTROMETRY [LARGE SCALE ANALYSIS]</scope>
    <source>
        <tissue>Brain</tissue>
        <tissue>Brown adipose tissue</tissue>
        <tissue>Heart</tissue>
        <tissue>Kidney</tissue>
        <tissue>Liver</tissue>
        <tissue>Lung</tissue>
        <tissue>Spleen</tissue>
    </source>
</reference>
<reference key="10">
    <citation type="journal article" date="2014" name="Mol. Cell. Proteomics">
        <title>Immunoaffinity enrichment and mass spectrometry analysis of protein methylation.</title>
        <authorList>
            <person name="Guo A."/>
            <person name="Gu H."/>
            <person name="Zhou J."/>
            <person name="Mulhern D."/>
            <person name="Wang Y."/>
            <person name="Lee K.A."/>
            <person name="Yang V."/>
            <person name="Aguiar M."/>
            <person name="Kornhauser J."/>
            <person name="Jia X."/>
            <person name="Ren J."/>
            <person name="Beausoleil S.A."/>
            <person name="Silva J.C."/>
            <person name="Vemulapalli V."/>
            <person name="Bedford M.T."/>
            <person name="Comb M.J."/>
        </authorList>
    </citation>
    <scope>METHYLATION [LARGE SCALE ANALYSIS] AT ARG-569</scope>
    <scope>IDENTIFICATION BY MASS SPECTROMETRY [LARGE SCALE ANALYSIS]</scope>
    <source>
        <tissue>Brain</tissue>
        <tissue>Embryo</tissue>
    </source>
</reference>
<dbReference type="EMBL" id="BX649226">
    <property type="protein sequence ID" value="CAM13451.1"/>
    <property type="status" value="ALT_SEQ"/>
    <property type="molecule type" value="Genomic_DNA"/>
</dbReference>
<dbReference type="EMBL" id="AL773540">
    <property type="protein sequence ID" value="CAM13451.1"/>
    <property type="status" value="JOINED"/>
    <property type="molecule type" value="Genomic_DNA"/>
</dbReference>
<dbReference type="EMBL" id="AL929100">
    <property type="protein sequence ID" value="CAM13451.1"/>
    <property type="status" value="JOINED"/>
    <property type="molecule type" value="Genomic_DNA"/>
</dbReference>
<dbReference type="EMBL" id="AL773540">
    <property type="protein sequence ID" value="CAM16533.1"/>
    <property type="status" value="ALT_SEQ"/>
    <property type="molecule type" value="Genomic_DNA"/>
</dbReference>
<dbReference type="EMBL" id="AL929100">
    <property type="protein sequence ID" value="CAM16533.1"/>
    <property type="status" value="JOINED"/>
    <property type="molecule type" value="Genomic_DNA"/>
</dbReference>
<dbReference type="EMBL" id="BX649226">
    <property type="protein sequence ID" value="CAM16533.1"/>
    <property type="status" value="JOINED"/>
    <property type="molecule type" value="Genomic_DNA"/>
</dbReference>
<dbReference type="EMBL" id="AL929100">
    <property type="protein sequence ID" value="CAM24301.1"/>
    <property type="status" value="ALT_SEQ"/>
    <property type="molecule type" value="Genomic_DNA"/>
</dbReference>
<dbReference type="EMBL" id="AL773540">
    <property type="protein sequence ID" value="CAM24301.1"/>
    <property type="status" value="JOINED"/>
    <property type="molecule type" value="Genomic_DNA"/>
</dbReference>
<dbReference type="EMBL" id="BX649226">
    <property type="protein sequence ID" value="CAM24301.1"/>
    <property type="status" value="JOINED"/>
    <property type="molecule type" value="Genomic_DNA"/>
</dbReference>
<dbReference type="EMBL" id="BC043038">
    <property type="protein sequence ID" value="AAH43038.1"/>
    <property type="molecule type" value="mRNA"/>
</dbReference>
<dbReference type="EMBL" id="BC076629">
    <property type="protein sequence ID" value="AAH76629.1"/>
    <property type="status" value="ALT_INIT"/>
    <property type="molecule type" value="mRNA"/>
</dbReference>
<dbReference type="EMBL" id="AK122508">
    <property type="protein sequence ID" value="BAC65790.1"/>
    <property type="molecule type" value="Transcribed_RNA"/>
</dbReference>
<dbReference type="CCDS" id="CCDS38054.2"/>
<dbReference type="RefSeq" id="NP_001074833.3">
    <property type="nucleotide sequence ID" value="NM_001081364.3"/>
</dbReference>
<dbReference type="SMR" id="Q6DFV3"/>
<dbReference type="BioGRID" id="214707">
    <property type="interactions" value="47"/>
</dbReference>
<dbReference type="FunCoup" id="Q6DFV3">
    <property type="interactions" value="828"/>
</dbReference>
<dbReference type="IntAct" id="Q6DFV3">
    <property type="interactions" value="6"/>
</dbReference>
<dbReference type="MINT" id="Q6DFV3"/>
<dbReference type="STRING" id="10090.ENSMUSP00000122497"/>
<dbReference type="GlyGen" id="Q6DFV3">
    <property type="glycosylation" value="2 sites, 1 O-linked glycan (1 site)"/>
</dbReference>
<dbReference type="iPTMnet" id="Q6DFV3"/>
<dbReference type="PhosphoSitePlus" id="Q6DFV3"/>
<dbReference type="SwissPalm" id="Q6DFV3"/>
<dbReference type="jPOST" id="Q6DFV3"/>
<dbReference type="PaxDb" id="10090-ENSMUSP00000133851"/>
<dbReference type="ProteomicsDB" id="255264"/>
<dbReference type="Pumba" id="Q6DFV3"/>
<dbReference type="GeneID" id="71435"/>
<dbReference type="KEGG" id="mmu:71435"/>
<dbReference type="AGR" id="MGI:1918685"/>
<dbReference type="CTD" id="57584"/>
<dbReference type="MGI" id="MGI:1918685">
    <property type="gene designation" value="Arhgap21"/>
</dbReference>
<dbReference type="eggNOG" id="KOG4407">
    <property type="taxonomic scope" value="Eukaryota"/>
</dbReference>
<dbReference type="InParanoid" id="Q6DFV3"/>
<dbReference type="OrthoDB" id="6281275at2759"/>
<dbReference type="Reactome" id="R-MMU-8980692">
    <property type="pathway name" value="RHOA GTPase cycle"/>
</dbReference>
<dbReference type="Reactome" id="R-MMU-9013026">
    <property type="pathway name" value="RHOB GTPase cycle"/>
</dbReference>
<dbReference type="Reactome" id="R-MMU-9013106">
    <property type="pathway name" value="RHOC GTPase cycle"/>
</dbReference>
<dbReference type="Reactome" id="R-MMU-9013148">
    <property type="pathway name" value="CDC42 GTPase cycle"/>
</dbReference>
<dbReference type="Reactome" id="R-MMU-9013149">
    <property type="pathway name" value="RAC1 GTPase cycle"/>
</dbReference>
<dbReference type="Reactome" id="R-MMU-9013404">
    <property type="pathway name" value="RAC2 GTPase cycle"/>
</dbReference>
<dbReference type="Reactome" id="R-MMU-9013405">
    <property type="pathway name" value="RHOD GTPase cycle"/>
</dbReference>
<dbReference type="Reactome" id="R-MMU-9013406">
    <property type="pathway name" value="RHOQ GTPase cycle"/>
</dbReference>
<dbReference type="Reactome" id="R-MMU-9013408">
    <property type="pathway name" value="RHOG GTPase cycle"/>
</dbReference>
<dbReference type="Reactome" id="R-MMU-9013409">
    <property type="pathway name" value="RHOJ GTPase cycle"/>
</dbReference>
<dbReference type="Reactome" id="R-MMU-9013423">
    <property type="pathway name" value="RAC3 GTPase cycle"/>
</dbReference>
<dbReference type="Reactome" id="R-MMU-9035034">
    <property type="pathway name" value="RHOF GTPase cycle"/>
</dbReference>
<dbReference type="Reactome" id="R-MMU-9696264">
    <property type="pathway name" value="RND3 GTPase cycle"/>
</dbReference>
<dbReference type="BioGRID-ORCS" id="71435">
    <property type="hits" value="3 hits in 78 CRISPR screens"/>
</dbReference>
<dbReference type="CD-CODE" id="CE726F99">
    <property type="entry name" value="Postsynaptic density"/>
</dbReference>
<dbReference type="ChiTaRS" id="Arhgap21">
    <property type="organism name" value="mouse"/>
</dbReference>
<dbReference type="PRO" id="PR:Q6DFV3"/>
<dbReference type="Proteomes" id="UP000000589">
    <property type="component" value="Unplaced"/>
</dbReference>
<dbReference type="RNAct" id="Q6DFV3">
    <property type="molecule type" value="protein"/>
</dbReference>
<dbReference type="GO" id="GO:0070161">
    <property type="term" value="C:anchoring junction"/>
    <property type="evidence" value="ECO:0007669"/>
    <property type="project" value="UniProtKB-SubCell"/>
</dbReference>
<dbReference type="GO" id="GO:0030659">
    <property type="term" value="C:cytoplasmic vesicle membrane"/>
    <property type="evidence" value="ECO:0007669"/>
    <property type="project" value="UniProtKB-SubCell"/>
</dbReference>
<dbReference type="GO" id="GO:0005856">
    <property type="term" value="C:cytoskeleton"/>
    <property type="evidence" value="ECO:0007669"/>
    <property type="project" value="UniProtKB-SubCell"/>
</dbReference>
<dbReference type="GO" id="GO:0000139">
    <property type="term" value="C:Golgi membrane"/>
    <property type="evidence" value="ECO:0007669"/>
    <property type="project" value="UniProtKB-SubCell"/>
</dbReference>
<dbReference type="GO" id="GO:0005886">
    <property type="term" value="C:plasma membrane"/>
    <property type="evidence" value="ECO:0000314"/>
    <property type="project" value="MGI"/>
</dbReference>
<dbReference type="GO" id="GO:0005096">
    <property type="term" value="F:GTPase activator activity"/>
    <property type="evidence" value="ECO:0007669"/>
    <property type="project" value="UniProtKB-KW"/>
</dbReference>
<dbReference type="GO" id="GO:0030100">
    <property type="term" value="P:regulation of endocytosis"/>
    <property type="evidence" value="ECO:0000315"/>
    <property type="project" value="MGI"/>
</dbReference>
<dbReference type="GO" id="GO:0007165">
    <property type="term" value="P:signal transduction"/>
    <property type="evidence" value="ECO:0007669"/>
    <property type="project" value="InterPro"/>
</dbReference>
<dbReference type="CDD" id="cd06756">
    <property type="entry name" value="PDZ_ARHGAP21_23-like"/>
    <property type="match status" value="1"/>
</dbReference>
<dbReference type="CDD" id="cd01253">
    <property type="entry name" value="PH_ARHGAP21-like"/>
    <property type="match status" value="1"/>
</dbReference>
<dbReference type="CDD" id="cd04395">
    <property type="entry name" value="RhoGAP_ARHGAP21"/>
    <property type="match status" value="1"/>
</dbReference>
<dbReference type="FunFam" id="1.10.555.10:FF:000014">
    <property type="entry name" value="Rho GTPase activating protein 21"/>
    <property type="match status" value="1"/>
</dbReference>
<dbReference type="FunFam" id="2.30.29.30:FF:000101">
    <property type="entry name" value="Rho GTPase activating protein 21"/>
    <property type="match status" value="1"/>
</dbReference>
<dbReference type="FunFam" id="2.30.42.10:FF:000066">
    <property type="entry name" value="Rho GTPase activating protein 21"/>
    <property type="match status" value="1"/>
</dbReference>
<dbReference type="Gene3D" id="1.20.5.220">
    <property type="match status" value="1"/>
</dbReference>
<dbReference type="Gene3D" id="2.30.42.10">
    <property type="match status" value="1"/>
</dbReference>
<dbReference type="Gene3D" id="2.30.29.30">
    <property type="entry name" value="Pleckstrin-homology domain (PH domain)/Phosphotyrosine-binding domain (PTB)"/>
    <property type="match status" value="1"/>
</dbReference>
<dbReference type="Gene3D" id="1.10.555.10">
    <property type="entry name" value="Rho GTPase activation protein"/>
    <property type="match status" value="1"/>
</dbReference>
<dbReference type="InterPro" id="IPR001478">
    <property type="entry name" value="PDZ"/>
</dbReference>
<dbReference type="InterPro" id="IPR041489">
    <property type="entry name" value="PDZ_6"/>
</dbReference>
<dbReference type="InterPro" id="IPR036034">
    <property type="entry name" value="PDZ_sf"/>
</dbReference>
<dbReference type="InterPro" id="IPR011993">
    <property type="entry name" value="PH-like_dom_sf"/>
</dbReference>
<dbReference type="InterPro" id="IPR001849">
    <property type="entry name" value="PH_domain"/>
</dbReference>
<dbReference type="InterPro" id="IPR008936">
    <property type="entry name" value="Rho_GTPase_activation_prot"/>
</dbReference>
<dbReference type="InterPro" id="IPR000198">
    <property type="entry name" value="RhoGAP_dom"/>
</dbReference>
<dbReference type="PANTHER" id="PTHR23175">
    <property type="entry name" value="PDZ DOMAIN-CONTAINING PROTEIN"/>
    <property type="match status" value="1"/>
</dbReference>
<dbReference type="PANTHER" id="PTHR23175:SF16">
    <property type="entry name" value="RHO GTPASE-ACTIVATING PROTEIN 21"/>
    <property type="match status" value="1"/>
</dbReference>
<dbReference type="Pfam" id="PF17820">
    <property type="entry name" value="PDZ_6"/>
    <property type="match status" value="1"/>
</dbReference>
<dbReference type="Pfam" id="PF00169">
    <property type="entry name" value="PH"/>
    <property type="match status" value="1"/>
</dbReference>
<dbReference type="Pfam" id="PF00620">
    <property type="entry name" value="RhoGAP"/>
    <property type="match status" value="1"/>
</dbReference>
<dbReference type="SMART" id="SM00228">
    <property type="entry name" value="PDZ"/>
    <property type="match status" value="1"/>
</dbReference>
<dbReference type="SMART" id="SM00233">
    <property type="entry name" value="PH"/>
    <property type="match status" value="1"/>
</dbReference>
<dbReference type="SMART" id="SM00324">
    <property type="entry name" value="RhoGAP"/>
    <property type="match status" value="1"/>
</dbReference>
<dbReference type="SUPFAM" id="SSF48350">
    <property type="entry name" value="GTPase activation domain, GAP"/>
    <property type="match status" value="1"/>
</dbReference>
<dbReference type="SUPFAM" id="SSF50156">
    <property type="entry name" value="PDZ domain-like"/>
    <property type="match status" value="1"/>
</dbReference>
<dbReference type="SUPFAM" id="SSF50729">
    <property type="entry name" value="PH domain-like"/>
    <property type="match status" value="1"/>
</dbReference>
<dbReference type="PROSITE" id="PS50106">
    <property type="entry name" value="PDZ"/>
    <property type="match status" value="1"/>
</dbReference>
<dbReference type="PROSITE" id="PS50003">
    <property type="entry name" value="PH_DOMAIN"/>
    <property type="match status" value="1"/>
</dbReference>
<dbReference type="PROSITE" id="PS50238">
    <property type="entry name" value="RHOGAP"/>
    <property type="match status" value="1"/>
</dbReference>
<feature type="chain" id="PRO_0000305246" description="Rho GTPase-activating protein 21">
    <location>
        <begin position="1"/>
        <end position="1945"/>
    </location>
</feature>
<feature type="domain" description="PDZ" evidence="3">
    <location>
        <begin position="56"/>
        <end position="165"/>
    </location>
</feature>
<feature type="domain" description="PH" evidence="4">
    <location>
        <begin position="925"/>
        <end position="1034"/>
    </location>
</feature>
<feature type="domain" description="Rho-GAP" evidence="5">
    <location>
        <begin position="1141"/>
        <end position="1333"/>
    </location>
</feature>
<feature type="region of interest" description="Disordered" evidence="6">
    <location>
        <begin position="26"/>
        <end position="53"/>
    </location>
</feature>
<feature type="region of interest" description="Disordered" evidence="6">
    <location>
        <begin position="210"/>
        <end position="229"/>
    </location>
</feature>
<feature type="region of interest" description="Disordered" evidence="6">
    <location>
        <begin position="326"/>
        <end position="365"/>
    </location>
</feature>
<feature type="region of interest" description="Disordered" evidence="6">
    <location>
        <begin position="499"/>
        <end position="519"/>
    </location>
</feature>
<feature type="region of interest" description="Disordered" evidence="6">
    <location>
        <begin position="573"/>
        <end position="647"/>
    </location>
</feature>
<feature type="region of interest" description="Disordered" evidence="6">
    <location>
        <begin position="674"/>
        <end position="702"/>
    </location>
</feature>
<feature type="region of interest" description="Disordered" evidence="6">
    <location>
        <begin position="852"/>
        <end position="879"/>
    </location>
</feature>
<feature type="region of interest" description="Disordered" evidence="6">
    <location>
        <begin position="902"/>
        <end position="921"/>
    </location>
</feature>
<feature type="region of interest" description="Interaction with ARF1 and ARF6" evidence="1">
    <location>
        <begin position="924"/>
        <end position="1091"/>
    </location>
</feature>
<feature type="region of interest" description="Disordered" evidence="6">
    <location>
        <begin position="1080"/>
        <end position="1120"/>
    </location>
</feature>
<feature type="region of interest" description="Disordered" evidence="6">
    <location>
        <begin position="1373"/>
        <end position="1396"/>
    </location>
</feature>
<feature type="region of interest" description="Disordered" evidence="6">
    <location>
        <begin position="1412"/>
        <end position="1632"/>
    </location>
</feature>
<feature type="region of interest" description="Interaction with CTNNA1" evidence="1">
    <location>
        <begin position="1579"/>
        <end position="1848"/>
    </location>
</feature>
<feature type="region of interest" description="Disordered" evidence="6">
    <location>
        <begin position="1649"/>
        <end position="1794"/>
    </location>
</feature>
<feature type="region of interest" description="Disordered" evidence="6">
    <location>
        <begin position="1846"/>
        <end position="1945"/>
    </location>
</feature>
<feature type="compositionally biased region" description="Basic and acidic residues" evidence="6">
    <location>
        <begin position="29"/>
        <end position="38"/>
    </location>
</feature>
<feature type="compositionally biased region" description="Low complexity" evidence="6">
    <location>
        <begin position="347"/>
        <end position="358"/>
    </location>
</feature>
<feature type="compositionally biased region" description="Polar residues" evidence="6">
    <location>
        <begin position="499"/>
        <end position="512"/>
    </location>
</feature>
<feature type="compositionally biased region" description="Polar residues" evidence="6">
    <location>
        <begin position="589"/>
        <end position="600"/>
    </location>
</feature>
<feature type="compositionally biased region" description="Polar residues" evidence="6">
    <location>
        <begin position="674"/>
        <end position="696"/>
    </location>
</feature>
<feature type="compositionally biased region" description="Basic and acidic residues" evidence="6">
    <location>
        <begin position="866"/>
        <end position="879"/>
    </location>
</feature>
<feature type="compositionally biased region" description="Basic and acidic residues" evidence="6">
    <location>
        <begin position="1093"/>
        <end position="1116"/>
    </location>
</feature>
<feature type="compositionally biased region" description="Low complexity" evidence="6">
    <location>
        <begin position="1377"/>
        <end position="1395"/>
    </location>
</feature>
<feature type="compositionally biased region" description="Basic and acidic residues" evidence="6">
    <location>
        <begin position="1435"/>
        <end position="1457"/>
    </location>
</feature>
<feature type="compositionally biased region" description="Basic and acidic residues" evidence="6">
    <location>
        <begin position="1471"/>
        <end position="1488"/>
    </location>
</feature>
<feature type="compositionally biased region" description="Low complexity" evidence="6">
    <location>
        <begin position="1531"/>
        <end position="1556"/>
    </location>
</feature>
<feature type="compositionally biased region" description="Low complexity" evidence="6">
    <location>
        <begin position="1569"/>
        <end position="1589"/>
    </location>
</feature>
<feature type="compositionally biased region" description="Polar residues" evidence="6">
    <location>
        <begin position="1590"/>
        <end position="1599"/>
    </location>
</feature>
<feature type="compositionally biased region" description="Basic and acidic residues" evidence="6">
    <location>
        <begin position="1611"/>
        <end position="1621"/>
    </location>
</feature>
<feature type="compositionally biased region" description="Polar residues" evidence="6">
    <location>
        <begin position="1658"/>
        <end position="1681"/>
    </location>
</feature>
<feature type="compositionally biased region" description="Polar residues" evidence="6">
    <location>
        <begin position="1729"/>
        <end position="1738"/>
    </location>
</feature>
<feature type="compositionally biased region" description="Basic and acidic residues" evidence="6">
    <location>
        <begin position="1739"/>
        <end position="1757"/>
    </location>
</feature>
<feature type="compositionally biased region" description="Basic residues" evidence="6">
    <location>
        <begin position="1782"/>
        <end position="1792"/>
    </location>
</feature>
<feature type="compositionally biased region" description="Polar residues" evidence="6">
    <location>
        <begin position="1871"/>
        <end position="1882"/>
    </location>
</feature>
<feature type="compositionally biased region" description="Low complexity" evidence="6">
    <location>
        <begin position="1887"/>
        <end position="1896"/>
    </location>
</feature>
<feature type="compositionally biased region" description="Polar residues" evidence="6">
    <location>
        <begin position="1907"/>
        <end position="1927"/>
    </location>
</feature>
<feature type="compositionally biased region" description="Basic and acidic residues" evidence="6">
    <location>
        <begin position="1932"/>
        <end position="1945"/>
    </location>
</feature>
<feature type="site" description="Arginine finger; crucial for GTP hydrolysis by stabilizing the transition state" evidence="5">
    <location>
        <position position="1178"/>
    </location>
</feature>
<feature type="modified residue" description="Phosphoserine" evidence="12">
    <location>
        <position position="42"/>
    </location>
</feature>
<feature type="modified residue" description="Phosphoserine" evidence="2">
    <location>
        <position position="63"/>
    </location>
</feature>
<feature type="modified residue" description="Phosphoserine" evidence="2">
    <location>
        <position position="454"/>
    </location>
</feature>
<feature type="modified residue" description="Omega-N-methylarginine" evidence="2">
    <location>
        <position position="549"/>
    </location>
</feature>
<feature type="modified residue" description="Omega-N-methylarginine" evidence="13">
    <location>
        <position position="569"/>
    </location>
</feature>
<feature type="modified residue" description="Phosphoserine" evidence="2">
    <location>
        <position position="610"/>
    </location>
</feature>
<feature type="modified residue" description="Phosphoserine" evidence="2">
    <location>
        <position position="619"/>
    </location>
</feature>
<feature type="modified residue" description="Phosphothreonine" evidence="2">
    <location>
        <position position="741"/>
    </location>
</feature>
<feature type="modified residue" description="Phosphoserine" evidence="12">
    <location>
        <position position="851"/>
    </location>
</feature>
<feature type="modified residue" description="Phosphoserine" evidence="12">
    <location>
        <position position="856"/>
    </location>
</feature>
<feature type="modified residue" description="Phosphoserine" evidence="2">
    <location>
        <position position="875"/>
    </location>
</feature>
<feature type="modified residue" description="Phosphotyrosine" evidence="2">
    <location>
        <position position="876"/>
    </location>
</feature>
<feature type="modified residue" description="Phosphoserine" evidence="11 12">
    <location>
        <position position="918"/>
    </location>
</feature>
<feature type="modified residue" description="Phosphoserine" evidence="12">
    <location>
        <position position="920"/>
    </location>
</feature>
<feature type="modified residue" description="Phosphoserine" evidence="2">
    <location>
        <position position="948"/>
    </location>
</feature>
<feature type="modified residue" description="Phosphoserine" evidence="10">
    <location>
        <position position="1093"/>
    </location>
</feature>
<feature type="modified residue" description="Phosphoserine" evidence="2">
    <location>
        <position position="1109"/>
    </location>
</feature>
<feature type="modified residue" description="Phosphoserine" evidence="2">
    <location>
        <position position="1412"/>
    </location>
</feature>
<feature type="modified residue" description="Phosphoserine" evidence="2">
    <location>
        <position position="1426"/>
    </location>
</feature>
<feature type="modified residue" description="Phosphoserine" evidence="12">
    <location>
        <position position="1427"/>
    </location>
</feature>
<feature type="modified residue" description="Phosphothreonine" evidence="2">
    <location>
        <position position="1504"/>
    </location>
</feature>
<feature type="modified residue" description="Phosphoserine" evidence="12">
    <location>
        <position position="1656"/>
    </location>
</feature>
<feature type="modified residue" description="Phosphothreonine" evidence="12">
    <location>
        <position position="1669"/>
    </location>
</feature>
<feature type="modified residue" description="Phosphoserine" evidence="2">
    <location>
        <position position="1729"/>
    </location>
</feature>
<feature type="modified residue" description="Phosphothreonine" evidence="12">
    <location>
        <position position="1902"/>
    </location>
</feature>
<feature type="modified residue" description="Phosphoserine" evidence="12">
    <location>
        <position position="1906"/>
    </location>
</feature>
<feature type="cross-link" description="Glycyl lysine isopeptide (Lys-Gly) (interchain with G-Cter in SUMO)" evidence="1">
    <location>
        <position position="1438"/>
    </location>
</feature>
<feature type="sequence conflict" description="In Ref. 1; AAH43038, 2 and 3; BAC65790." evidence="8" ref="1 2 3">
    <original>P</original>
    <variation>S</variation>
    <location>
        <position position="1492"/>
    </location>
</feature>
<organism>
    <name type="scientific">Mus musculus</name>
    <name type="common">Mouse</name>
    <dbReference type="NCBI Taxonomy" id="10090"/>
    <lineage>
        <taxon>Eukaryota</taxon>
        <taxon>Metazoa</taxon>
        <taxon>Chordata</taxon>
        <taxon>Craniata</taxon>
        <taxon>Vertebrata</taxon>
        <taxon>Euteleostomi</taxon>
        <taxon>Mammalia</taxon>
        <taxon>Eutheria</taxon>
        <taxon>Euarchontoglires</taxon>
        <taxon>Glires</taxon>
        <taxon>Rodentia</taxon>
        <taxon>Myomorpha</taxon>
        <taxon>Muroidea</taxon>
        <taxon>Muridae</taxon>
        <taxon>Murinae</taxon>
        <taxon>Mus</taxon>
        <taxon>Mus</taxon>
    </lineage>
</organism>
<comment type="function">
    <text evidence="1">Functions as a GTPase-activating protein (GAP) for RHOA and CDC42. Downstream partner of ARF1 which may control Golgi apparatus structure and function. Also required for CTNNA1 recruitment to adherens junctions (By similarity).</text>
</comment>
<comment type="subunit">
    <text evidence="1 7">Interacts with CTNNA1 (By similarity). Interacts with GTP-bound ARF1 and probably ARF6.</text>
</comment>
<comment type="subcellular location">
    <subcellularLocation>
        <location evidence="1">Golgi apparatus membrane</location>
        <topology evidence="1">Peripheral membrane protein</topology>
    </subcellularLocation>
    <subcellularLocation>
        <location evidence="1">Cell junction</location>
    </subcellularLocation>
    <subcellularLocation>
        <location evidence="1">Cytoplasmic vesicle membrane</location>
        <topology evidence="1">Peripheral membrane protein</topology>
    </subcellularLocation>
    <subcellularLocation>
        <location evidence="1">Cytoplasm</location>
        <location evidence="1">Cytoskeleton</location>
    </subcellularLocation>
    <text evidence="1">Localization to the Golgi is dependent on interaction with GTP-bound ARF1.</text>
</comment>
<comment type="PTM">
    <text evidence="1">Sumoylated with SUMO2 and SUMO3 in proliferating lymphocytes.</text>
</comment>
<comment type="sequence caution" evidence="8">
    <conflict type="erroneous initiation">
        <sequence resource="EMBL-CDS" id="AAH76629"/>
    </conflict>
    <text>Truncated N-terminus.</text>
</comment>
<comment type="sequence caution" evidence="8">
    <conflict type="erroneous gene model prediction">
        <sequence resource="EMBL-CDS" id="CAM13451"/>
    </conflict>
</comment>
<comment type="sequence caution" evidence="8">
    <conflict type="erroneous gene model prediction">
        <sequence resource="EMBL-CDS" id="CAM16533"/>
    </conflict>
</comment>
<comment type="sequence caution" evidence="8">
    <conflict type="erroneous gene model prediction">
        <sequence resource="EMBL-CDS" id="CAM24301"/>
    </conflict>
</comment>
<accession>Q6DFV3</accession>
<accession>A2AL67</accession>
<accession>Q80TD7</accession>
<accession>Q80XS1</accession>
<gene>
    <name evidence="9" type="primary">Arhgap21</name>
    <name type="synonym">Arhgap10</name>
    <name type="synonym">Kiaa1424</name>
</gene>
<evidence type="ECO:0000250" key="1"/>
<evidence type="ECO:0000250" key="2">
    <source>
        <dbReference type="UniProtKB" id="Q5T5U3"/>
    </source>
</evidence>
<evidence type="ECO:0000255" key="3">
    <source>
        <dbReference type="PROSITE-ProRule" id="PRU00143"/>
    </source>
</evidence>
<evidence type="ECO:0000255" key="4">
    <source>
        <dbReference type="PROSITE-ProRule" id="PRU00145"/>
    </source>
</evidence>
<evidence type="ECO:0000255" key="5">
    <source>
        <dbReference type="PROSITE-ProRule" id="PRU00172"/>
    </source>
</evidence>
<evidence type="ECO:0000256" key="6">
    <source>
        <dbReference type="SAM" id="MobiDB-lite"/>
    </source>
</evidence>
<evidence type="ECO:0000269" key="7">
    <source>
    </source>
</evidence>
<evidence type="ECO:0000305" key="8"/>
<evidence type="ECO:0000312" key="9">
    <source>
        <dbReference type="MGI" id="MGI:1918685"/>
    </source>
</evidence>
<evidence type="ECO:0007744" key="10">
    <source>
    </source>
</evidence>
<evidence type="ECO:0007744" key="11">
    <source>
    </source>
</evidence>
<evidence type="ECO:0007744" key="12">
    <source>
    </source>
</evidence>
<evidence type="ECO:0007744" key="13">
    <source>
    </source>
</evidence>
<proteinExistence type="evidence at protein level"/>
<name>RHG21_MOUSE</name>